<name>RL21_OCEIH</name>
<dbReference type="EMBL" id="BA000028">
    <property type="protein sequence ID" value="BAC14002.1"/>
    <property type="molecule type" value="Genomic_DNA"/>
</dbReference>
<dbReference type="RefSeq" id="WP_011066441.1">
    <property type="nucleotide sequence ID" value="NC_004193.1"/>
</dbReference>
<dbReference type="SMR" id="Q8EPP6"/>
<dbReference type="STRING" id="221109.gene:10734292"/>
<dbReference type="KEGG" id="oih:OB2046"/>
<dbReference type="eggNOG" id="COG0261">
    <property type="taxonomic scope" value="Bacteria"/>
</dbReference>
<dbReference type="HOGENOM" id="CLU_061463_3_2_9"/>
<dbReference type="OrthoDB" id="9813334at2"/>
<dbReference type="PhylomeDB" id="Q8EPP6"/>
<dbReference type="Proteomes" id="UP000000822">
    <property type="component" value="Chromosome"/>
</dbReference>
<dbReference type="GO" id="GO:0005737">
    <property type="term" value="C:cytoplasm"/>
    <property type="evidence" value="ECO:0007669"/>
    <property type="project" value="UniProtKB-ARBA"/>
</dbReference>
<dbReference type="GO" id="GO:1990904">
    <property type="term" value="C:ribonucleoprotein complex"/>
    <property type="evidence" value="ECO:0007669"/>
    <property type="project" value="UniProtKB-KW"/>
</dbReference>
<dbReference type="GO" id="GO:0005840">
    <property type="term" value="C:ribosome"/>
    <property type="evidence" value="ECO:0007669"/>
    <property type="project" value="UniProtKB-KW"/>
</dbReference>
<dbReference type="GO" id="GO:0019843">
    <property type="term" value="F:rRNA binding"/>
    <property type="evidence" value="ECO:0007669"/>
    <property type="project" value="UniProtKB-UniRule"/>
</dbReference>
<dbReference type="GO" id="GO:0003735">
    <property type="term" value="F:structural constituent of ribosome"/>
    <property type="evidence" value="ECO:0007669"/>
    <property type="project" value="InterPro"/>
</dbReference>
<dbReference type="GO" id="GO:0006412">
    <property type="term" value="P:translation"/>
    <property type="evidence" value="ECO:0007669"/>
    <property type="project" value="UniProtKB-UniRule"/>
</dbReference>
<dbReference type="HAMAP" id="MF_01363">
    <property type="entry name" value="Ribosomal_bL21"/>
    <property type="match status" value="1"/>
</dbReference>
<dbReference type="InterPro" id="IPR028909">
    <property type="entry name" value="bL21-like"/>
</dbReference>
<dbReference type="InterPro" id="IPR036164">
    <property type="entry name" value="bL21-like_sf"/>
</dbReference>
<dbReference type="InterPro" id="IPR001787">
    <property type="entry name" value="Ribosomal_bL21"/>
</dbReference>
<dbReference type="InterPro" id="IPR018258">
    <property type="entry name" value="Ribosomal_bL21_CS"/>
</dbReference>
<dbReference type="NCBIfam" id="TIGR00061">
    <property type="entry name" value="L21"/>
    <property type="match status" value="1"/>
</dbReference>
<dbReference type="PANTHER" id="PTHR21349">
    <property type="entry name" value="50S RIBOSOMAL PROTEIN L21"/>
    <property type="match status" value="1"/>
</dbReference>
<dbReference type="PANTHER" id="PTHR21349:SF0">
    <property type="entry name" value="LARGE RIBOSOMAL SUBUNIT PROTEIN BL21M"/>
    <property type="match status" value="1"/>
</dbReference>
<dbReference type="Pfam" id="PF00829">
    <property type="entry name" value="Ribosomal_L21p"/>
    <property type="match status" value="1"/>
</dbReference>
<dbReference type="SUPFAM" id="SSF141091">
    <property type="entry name" value="L21p-like"/>
    <property type="match status" value="1"/>
</dbReference>
<dbReference type="PROSITE" id="PS01169">
    <property type="entry name" value="RIBOSOMAL_L21"/>
    <property type="match status" value="1"/>
</dbReference>
<comment type="function">
    <text evidence="1">This protein binds to 23S rRNA in the presence of protein L20.</text>
</comment>
<comment type="subunit">
    <text evidence="1">Part of the 50S ribosomal subunit. Contacts protein L20.</text>
</comment>
<comment type="similarity">
    <text evidence="1">Belongs to the bacterial ribosomal protein bL21 family.</text>
</comment>
<organism>
    <name type="scientific">Oceanobacillus iheyensis (strain DSM 14371 / CIP 107618 / JCM 11309 / KCTC 3954 / HTE831)</name>
    <dbReference type="NCBI Taxonomy" id="221109"/>
    <lineage>
        <taxon>Bacteria</taxon>
        <taxon>Bacillati</taxon>
        <taxon>Bacillota</taxon>
        <taxon>Bacilli</taxon>
        <taxon>Bacillales</taxon>
        <taxon>Bacillaceae</taxon>
        <taxon>Oceanobacillus</taxon>
    </lineage>
</organism>
<gene>
    <name evidence="1" type="primary">rplU</name>
    <name type="ordered locus">OB2046</name>
</gene>
<reference key="1">
    <citation type="journal article" date="2002" name="Nucleic Acids Res.">
        <title>Genome sequence of Oceanobacillus iheyensis isolated from the Iheya Ridge and its unexpected adaptive capabilities to extreme environments.</title>
        <authorList>
            <person name="Takami H."/>
            <person name="Takaki Y."/>
            <person name="Uchiyama I."/>
        </authorList>
    </citation>
    <scope>NUCLEOTIDE SEQUENCE [LARGE SCALE GENOMIC DNA]</scope>
    <source>
        <strain>DSM 14371 / CIP 107618 / JCM 11309 / KCTC 3954 / HTE831</strain>
    </source>
</reference>
<keyword id="KW-1185">Reference proteome</keyword>
<keyword id="KW-0687">Ribonucleoprotein</keyword>
<keyword id="KW-0689">Ribosomal protein</keyword>
<keyword id="KW-0694">RNA-binding</keyword>
<keyword id="KW-0699">rRNA-binding</keyword>
<proteinExistence type="inferred from homology"/>
<evidence type="ECO:0000255" key="1">
    <source>
        <dbReference type="HAMAP-Rule" id="MF_01363"/>
    </source>
</evidence>
<evidence type="ECO:0000305" key="2"/>
<accession>Q8EPP6</accession>
<protein>
    <recommendedName>
        <fullName evidence="1">Large ribosomal subunit protein bL21</fullName>
    </recommendedName>
    <alternativeName>
        <fullName evidence="2">50S ribosomal protein L21</fullName>
    </alternativeName>
</protein>
<feature type="chain" id="PRO_0000269353" description="Large ribosomal subunit protein bL21">
    <location>
        <begin position="1"/>
        <end position="102"/>
    </location>
</feature>
<sequence length="102" mass="11446">MYAIIETGGKQIKVVEGQEIYVEKVTADVNESVTFDKVLFIGGDDVKVGAPLIDGATVTAKVEKHGRQKKIDVHKFKPKKNYHRKQGHRQPYTKLVIDKINA</sequence>